<name>HACL1_ORYSJ</name>
<organism>
    <name type="scientific">Oryza sativa subsp. japonica</name>
    <name type="common">Rice</name>
    <dbReference type="NCBI Taxonomy" id="39947"/>
    <lineage>
        <taxon>Eukaryota</taxon>
        <taxon>Viridiplantae</taxon>
        <taxon>Streptophyta</taxon>
        <taxon>Embryophyta</taxon>
        <taxon>Tracheophyta</taxon>
        <taxon>Spermatophyta</taxon>
        <taxon>Magnoliopsida</taxon>
        <taxon>Liliopsida</taxon>
        <taxon>Poales</taxon>
        <taxon>Poaceae</taxon>
        <taxon>BOP clade</taxon>
        <taxon>Oryzoideae</taxon>
        <taxon>Oryzeae</taxon>
        <taxon>Oryzinae</taxon>
        <taxon>Oryza</taxon>
        <taxon>Oryza sativa</taxon>
    </lineage>
</organism>
<comment type="function">
    <text evidence="2">Acetyltransferase enzyme. Acetylates histones, giving a specific tag for transcriptional activation.</text>
</comment>
<comment type="catalytic activity">
    <reaction evidence="2">
        <text>L-lysyl-[protein] + acetyl-CoA = N(6)-acetyl-L-lysyl-[protein] + CoA + H(+)</text>
        <dbReference type="Rhea" id="RHEA:45948"/>
        <dbReference type="Rhea" id="RHEA-COMP:9752"/>
        <dbReference type="Rhea" id="RHEA-COMP:10731"/>
        <dbReference type="ChEBI" id="CHEBI:15378"/>
        <dbReference type="ChEBI" id="CHEBI:29969"/>
        <dbReference type="ChEBI" id="CHEBI:57287"/>
        <dbReference type="ChEBI" id="CHEBI:57288"/>
        <dbReference type="ChEBI" id="CHEBI:61930"/>
        <dbReference type="EC" id="2.3.1.48"/>
    </reaction>
</comment>
<comment type="subcellular location">
    <subcellularLocation>
        <location evidence="8">Nucleus</location>
    </subcellularLocation>
</comment>
<comment type="sequence caution" evidence="8">
    <conflict type="erroneous gene model prediction">
        <sequence resource="EMBL-CDS" id="BAD10378"/>
    </conflict>
</comment>
<comment type="sequence caution" evidence="8">
    <conflict type="erroneous gene model prediction">
        <sequence resource="EMBL-CDS" id="BAD10522"/>
    </conflict>
</comment>
<comment type="sequence caution" evidence="8">
    <conflict type="erroneous gene model prediction">
        <sequence resource="EMBL-CDS" id="BAF07744"/>
    </conflict>
</comment>
<protein>
    <recommendedName>
        <fullName>Probable histone acetyltransferase HAC-like 1</fullName>
        <ecNumber evidence="2">2.3.1.48</ecNumber>
    </recommendedName>
</protein>
<proteinExistence type="inferred from homology"/>
<gene>
    <name type="ordered locus">Os02g0137500</name>
    <name type="ordered locus">LOC_Os02g04490</name>
    <name type="ORF">OSJNBa0026E05.8</name>
    <name type="ORF">OSJNBa0081C13.32</name>
</gene>
<reference key="1">
    <citation type="journal article" date="2005" name="Nature">
        <title>The map-based sequence of the rice genome.</title>
        <authorList>
            <consortium name="International rice genome sequencing project (IRGSP)"/>
        </authorList>
    </citation>
    <scope>NUCLEOTIDE SEQUENCE [LARGE SCALE GENOMIC DNA]</scope>
    <source>
        <strain>cv. Nipponbare</strain>
    </source>
</reference>
<reference key="2">
    <citation type="journal article" date="2008" name="Nucleic Acids Res.">
        <title>The rice annotation project database (RAP-DB): 2008 update.</title>
        <authorList>
            <consortium name="The rice annotation project (RAP)"/>
        </authorList>
    </citation>
    <scope>GENOME REANNOTATION</scope>
    <source>
        <strain>cv. Nipponbare</strain>
    </source>
</reference>
<reference key="3">
    <citation type="journal article" date="2013" name="Rice">
        <title>Improvement of the Oryza sativa Nipponbare reference genome using next generation sequence and optical map data.</title>
        <authorList>
            <person name="Kawahara Y."/>
            <person name="de la Bastide M."/>
            <person name="Hamilton J.P."/>
            <person name="Kanamori H."/>
            <person name="McCombie W.R."/>
            <person name="Ouyang S."/>
            <person name="Schwartz D.C."/>
            <person name="Tanaka T."/>
            <person name="Wu J."/>
            <person name="Zhou S."/>
            <person name="Childs K.L."/>
            <person name="Davidson R.M."/>
            <person name="Lin H."/>
            <person name="Quesada-Ocampo L."/>
            <person name="Vaillancourt B."/>
            <person name="Sakai H."/>
            <person name="Lee S.S."/>
            <person name="Kim J."/>
            <person name="Numa H."/>
            <person name="Itoh T."/>
            <person name="Buell C.R."/>
            <person name="Matsumoto T."/>
        </authorList>
    </citation>
    <scope>GENOME REANNOTATION</scope>
    <source>
        <strain>cv. Nipponbare</strain>
    </source>
</reference>
<feature type="chain" id="PRO_0000269745" description="Probable histone acetyltransferase HAC-like 1">
    <location>
        <begin position="1"/>
        <end position="1668"/>
    </location>
</feature>
<feature type="domain" description="CBP/p300-type HAT" evidence="6">
    <location>
        <begin position="1094"/>
        <end position="1530"/>
    </location>
</feature>
<feature type="zinc finger region" description="TAZ-type 1" evidence="4">
    <location>
        <begin position="651"/>
        <end position="732"/>
    </location>
</feature>
<feature type="zinc finger region" description="PHD-type">
    <location>
        <begin position="1002"/>
        <end position="1079"/>
    </location>
</feature>
<feature type="zinc finger region" description="ZZ-type" evidence="5">
    <location>
        <begin position="1412"/>
        <end position="1475"/>
    </location>
</feature>
<feature type="zinc finger region" description="TAZ-type 2" evidence="4">
    <location>
        <begin position="1553"/>
        <end position="1634"/>
    </location>
</feature>
<feature type="region of interest" description="Disordered" evidence="7">
    <location>
        <begin position="1"/>
        <end position="34"/>
    </location>
</feature>
<feature type="region of interest" description="Disordered" evidence="7">
    <location>
        <begin position="459"/>
        <end position="493"/>
    </location>
</feature>
<feature type="region of interest" description="Disordered" evidence="7">
    <location>
        <begin position="528"/>
        <end position="551"/>
    </location>
</feature>
<feature type="region of interest" description="Disordered" evidence="7">
    <location>
        <begin position="886"/>
        <end position="912"/>
    </location>
</feature>
<feature type="coiled-coil region" evidence="3">
    <location>
        <begin position="1342"/>
        <end position="1365"/>
    </location>
</feature>
<feature type="coiled-coil region" evidence="3">
    <location>
        <begin position="1630"/>
        <end position="1650"/>
    </location>
</feature>
<feature type="compositionally biased region" description="Polar residues" evidence="7">
    <location>
        <begin position="11"/>
        <end position="23"/>
    </location>
</feature>
<feature type="compositionally biased region" description="Low complexity" evidence="7">
    <location>
        <begin position="459"/>
        <end position="469"/>
    </location>
</feature>
<feature type="compositionally biased region" description="Polar residues" evidence="7">
    <location>
        <begin position="470"/>
        <end position="491"/>
    </location>
</feature>
<feature type="compositionally biased region" description="Polar residues" evidence="7">
    <location>
        <begin position="536"/>
        <end position="551"/>
    </location>
</feature>
<feature type="compositionally biased region" description="Basic and acidic residues" evidence="7">
    <location>
        <begin position="886"/>
        <end position="899"/>
    </location>
</feature>
<feature type="compositionally biased region" description="Polar residues" evidence="7">
    <location>
        <begin position="900"/>
        <end position="909"/>
    </location>
</feature>
<feature type="binding site" evidence="1">
    <location>
        <begin position="1217"/>
        <end position="1219"/>
    </location>
    <ligand>
        <name>acetyl-CoA</name>
        <dbReference type="ChEBI" id="CHEBI:57288"/>
    </ligand>
</feature>
<feature type="binding site" evidence="1">
    <location>
        <begin position="1236"/>
        <end position="1237"/>
    </location>
    <ligand>
        <name>acetyl-CoA</name>
        <dbReference type="ChEBI" id="CHEBI:57288"/>
    </ligand>
</feature>
<feature type="binding site" evidence="1">
    <location>
        <position position="1292"/>
    </location>
    <ligand>
        <name>acetyl-CoA</name>
        <dbReference type="ChEBI" id="CHEBI:57288"/>
    </ligand>
</feature>
<feature type="binding site" evidence="5">
    <location>
        <position position="1417"/>
    </location>
    <ligand>
        <name>Zn(2+)</name>
        <dbReference type="ChEBI" id="CHEBI:29105"/>
        <label>1</label>
    </ligand>
</feature>
<feature type="binding site" evidence="5">
    <location>
        <position position="1420"/>
    </location>
    <ligand>
        <name>Zn(2+)</name>
        <dbReference type="ChEBI" id="CHEBI:29105"/>
        <label>1</label>
    </ligand>
</feature>
<feature type="binding site" evidence="5">
    <location>
        <position position="1432"/>
    </location>
    <ligand>
        <name>Zn(2+)</name>
        <dbReference type="ChEBI" id="CHEBI:29105"/>
        <label>2</label>
    </ligand>
</feature>
<feature type="binding site" evidence="5">
    <location>
        <position position="1435"/>
    </location>
    <ligand>
        <name>Zn(2+)</name>
        <dbReference type="ChEBI" id="CHEBI:29105"/>
        <label>2</label>
    </ligand>
</feature>
<feature type="binding site" evidence="5">
    <location>
        <position position="1441"/>
    </location>
    <ligand>
        <name>Zn(2+)</name>
        <dbReference type="ChEBI" id="CHEBI:29105"/>
        <label>1</label>
    </ligand>
</feature>
<feature type="binding site" evidence="5">
    <location>
        <position position="1444"/>
    </location>
    <ligand>
        <name>Zn(2+)</name>
        <dbReference type="ChEBI" id="CHEBI:29105"/>
        <label>1</label>
    </ligand>
</feature>
<feature type="binding site" evidence="5">
    <location>
        <position position="1457"/>
    </location>
    <ligand>
        <name>Zn(2+)</name>
        <dbReference type="ChEBI" id="CHEBI:29105"/>
        <label>2</label>
    </ligand>
</feature>
<feature type="binding site" evidence="5">
    <location>
        <position position="1465"/>
    </location>
    <ligand>
        <name>Zn(2+)</name>
        <dbReference type="ChEBI" id="CHEBI:29105"/>
        <label>2</label>
    </ligand>
</feature>
<dbReference type="EC" id="2.3.1.48" evidence="2"/>
<dbReference type="EMBL" id="AP005474">
    <property type="protein sequence ID" value="BAD10378.1"/>
    <property type="status" value="ALT_SEQ"/>
    <property type="molecule type" value="Genomic_DNA"/>
</dbReference>
<dbReference type="EMBL" id="AP005647">
    <property type="protein sequence ID" value="BAD10522.1"/>
    <property type="status" value="ALT_SEQ"/>
    <property type="molecule type" value="Genomic_DNA"/>
</dbReference>
<dbReference type="EMBL" id="AP008208">
    <property type="protein sequence ID" value="BAF07744.2"/>
    <property type="status" value="ALT_SEQ"/>
    <property type="molecule type" value="Genomic_DNA"/>
</dbReference>
<dbReference type="EMBL" id="AP014958">
    <property type="status" value="NOT_ANNOTATED_CDS"/>
    <property type="molecule type" value="Genomic_DNA"/>
</dbReference>
<dbReference type="SMR" id="Q6YXY2"/>
<dbReference type="FunCoup" id="Q6YXY2">
    <property type="interactions" value="438"/>
</dbReference>
<dbReference type="STRING" id="39947.Q6YXY2"/>
<dbReference type="PaxDb" id="39947-Q6YXY2"/>
<dbReference type="KEGG" id="dosa:Os02g0137500"/>
<dbReference type="eggNOG" id="KOG1778">
    <property type="taxonomic scope" value="Eukaryota"/>
</dbReference>
<dbReference type="InParanoid" id="Q6YXY2"/>
<dbReference type="Proteomes" id="UP000000763">
    <property type="component" value="Chromosome 2"/>
</dbReference>
<dbReference type="Proteomes" id="UP000059680">
    <property type="component" value="Chromosome 2"/>
</dbReference>
<dbReference type="GO" id="GO:0000123">
    <property type="term" value="C:histone acetyltransferase complex"/>
    <property type="evidence" value="ECO:0000318"/>
    <property type="project" value="GO_Central"/>
</dbReference>
<dbReference type="GO" id="GO:0005634">
    <property type="term" value="C:nucleus"/>
    <property type="evidence" value="ECO:0007669"/>
    <property type="project" value="UniProtKB-SubCell"/>
</dbReference>
<dbReference type="GO" id="GO:0005667">
    <property type="term" value="C:transcription regulator complex"/>
    <property type="evidence" value="ECO:0000318"/>
    <property type="project" value="GO_Central"/>
</dbReference>
<dbReference type="GO" id="GO:0031490">
    <property type="term" value="F:chromatin DNA binding"/>
    <property type="evidence" value="ECO:0000318"/>
    <property type="project" value="GO_Central"/>
</dbReference>
<dbReference type="GO" id="GO:0004402">
    <property type="term" value="F:histone acetyltransferase activity"/>
    <property type="evidence" value="ECO:0000318"/>
    <property type="project" value="GO_Central"/>
</dbReference>
<dbReference type="GO" id="GO:0003713">
    <property type="term" value="F:transcription coactivator activity"/>
    <property type="evidence" value="ECO:0000318"/>
    <property type="project" value="GO_Central"/>
</dbReference>
<dbReference type="GO" id="GO:0008270">
    <property type="term" value="F:zinc ion binding"/>
    <property type="evidence" value="ECO:0007669"/>
    <property type="project" value="UniProtKB-KW"/>
</dbReference>
<dbReference type="GO" id="GO:0045944">
    <property type="term" value="P:positive regulation of transcription by RNA polymerase II"/>
    <property type="evidence" value="ECO:0000318"/>
    <property type="project" value="GO_Central"/>
</dbReference>
<dbReference type="CDD" id="cd15614">
    <property type="entry name" value="PHD_HAC_like"/>
    <property type="match status" value="1"/>
</dbReference>
<dbReference type="FunFam" id="1.20.1020.10:FF:000003">
    <property type="entry name" value="Histone acetyltransferase HAC1-like protein"/>
    <property type="match status" value="1"/>
</dbReference>
<dbReference type="FunFam" id="3.30.60.90:FF:000022">
    <property type="entry name" value="Histone acetyltransferase of the CBP family 12"/>
    <property type="match status" value="1"/>
</dbReference>
<dbReference type="Gene3D" id="3.30.60.90">
    <property type="match status" value="2"/>
</dbReference>
<dbReference type="Gene3D" id="1.20.1020.10">
    <property type="entry name" value="TAZ domain"/>
    <property type="match status" value="2"/>
</dbReference>
<dbReference type="Gene3D" id="3.30.40.10">
    <property type="entry name" value="Zinc/RING finger domain, C3HC4 (zinc finger)"/>
    <property type="match status" value="1"/>
</dbReference>
<dbReference type="InterPro" id="IPR031162">
    <property type="entry name" value="CBP_P300_HAT"/>
</dbReference>
<dbReference type="InterPro" id="IPR013178">
    <property type="entry name" value="Histone_AcTrfase_Rtt109/CBP"/>
</dbReference>
<dbReference type="InterPro" id="IPR035898">
    <property type="entry name" value="TAZ_dom_sf"/>
</dbReference>
<dbReference type="InterPro" id="IPR019786">
    <property type="entry name" value="Zinc_finger_PHD-type_CS"/>
</dbReference>
<dbReference type="InterPro" id="IPR011011">
    <property type="entry name" value="Znf_FYVE_PHD"/>
</dbReference>
<dbReference type="InterPro" id="IPR013083">
    <property type="entry name" value="Znf_RING/FYVE/PHD"/>
</dbReference>
<dbReference type="InterPro" id="IPR000197">
    <property type="entry name" value="Znf_TAZ"/>
</dbReference>
<dbReference type="InterPro" id="IPR000433">
    <property type="entry name" value="Znf_ZZ"/>
</dbReference>
<dbReference type="InterPro" id="IPR043145">
    <property type="entry name" value="Znf_ZZ_sf"/>
</dbReference>
<dbReference type="PANTHER" id="PTHR13808">
    <property type="entry name" value="CBP/P300-RELATED"/>
    <property type="match status" value="1"/>
</dbReference>
<dbReference type="PANTHER" id="PTHR13808:SF1">
    <property type="entry name" value="HISTONE ACETYLTRANSFERASE"/>
    <property type="match status" value="1"/>
</dbReference>
<dbReference type="Pfam" id="PF08214">
    <property type="entry name" value="HAT_KAT11"/>
    <property type="match status" value="1"/>
</dbReference>
<dbReference type="Pfam" id="PF02135">
    <property type="entry name" value="zf-TAZ"/>
    <property type="match status" value="2"/>
</dbReference>
<dbReference type="SMART" id="SM01250">
    <property type="entry name" value="KAT11"/>
    <property type="match status" value="1"/>
</dbReference>
<dbReference type="SMART" id="SM00551">
    <property type="entry name" value="ZnF_TAZ"/>
    <property type="match status" value="2"/>
</dbReference>
<dbReference type="SUPFAM" id="SSF57903">
    <property type="entry name" value="FYVE/PHD zinc finger"/>
    <property type="match status" value="1"/>
</dbReference>
<dbReference type="SUPFAM" id="SSF57850">
    <property type="entry name" value="RING/U-box"/>
    <property type="match status" value="2"/>
</dbReference>
<dbReference type="SUPFAM" id="SSF57933">
    <property type="entry name" value="TAZ domain"/>
    <property type="match status" value="2"/>
</dbReference>
<dbReference type="PROSITE" id="PS51727">
    <property type="entry name" value="CBP_P300_HAT"/>
    <property type="match status" value="1"/>
</dbReference>
<dbReference type="PROSITE" id="PS01359">
    <property type="entry name" value="ZF_PHD_1"/>
    <property type="match status" value="1"/>
</dbReference>
<dbReference type="PROSITE" id="PS50134">
    <property type="entry name" value="ZF_TAZ"/>
    <property type="match status" value="2"/>
</dbReference>
<dbReference type="PROSITE" id="PS01357">
    <property type="entry name" value="ZF_ZZ_1"/>
    <property type="match status" value="1"/>
</dbReference>
<dbReference type="PROSITE" id="PS50135">
    <property type="entry name" value="ZF_ZZ_2"/>
    <property type="match status" value="1"/>
</dbReference>
<evidence type="ECO:0000250" key="1">
    <source>
        <dbReference type="UniProtKB" id="Q09472"/>
    </source>
</evidence>
<evidence type="ECO:0000250" key="2">
    <source>
        <dbReference type="UniProtKB" id="Q9C5X9"/>
    </source>
</evidence>
<evidence type="ECO:0000255" key="3"/>
<evidence type="ECO:0000255" key="4">
    <source>
        <dbReference type="PROSITE-ProRule" id="PRU00203"/>
    </source>
</evidence>
<evidence type="ECO:0000255" key="5">
    <source>
        <dbReference type="PROSITE-ProRule" id="PRU00228"/>
    </source>
</evidence>
<evidence type="ECO:0000255" key="6">
    <source>
        <dbReference type="PROSITE-ProRule" id="PRU01065"/>
    </source>
</evidence>
<evidence type="ECO:0000256" key="7">
    <source>
        <dbReference type="SAM" id="MobiDB-lite"/>
    </source>
</evidence>
<evidence type="ECO:0000305" key="8"/>
<sequence>MNVGQAAHLSGQMSGQAPQTNQVGGSGVGGADGLPQQMQDVVGLGGLDTQFLLMRNTMRDRIFEYIGRKQSSTDWRRRLPELAKRLEEILYRKFLNKADYLNMMRGPVEPQLQFAIKTLSAQNQQNQQNQQMPRQMASSSGYGTMIPTPGITQSATGNSRMPYVTDNTGLPSSGATMVPQGANTGSMSNGYQHLTTSVPLNSTTSSIPSTMGPVGIQRQVTHMIPTPGFNNQQNVPVNPDFSNGAGYFNGEPTVTSQMQQQKQFPSNQNSHQIQHIGGHSNSGMHSNMLENSSAYGLSDGHVNGGMGVHGSNMQLTNRSAASEAYINISTYGNSPKPVQQQFNQHPPQRIPTPVDISGSGNFYNTGSSALTAANNHSMGATNLPSRSRMNSMLHTNQLNMQSIQPQPQIKTEVLDQPEKMNFQSSQLTHEQLIRQQHSMQQHQMQPSSQFVQNQYHLNQQQPNSQHQQSILRSNSLKQPQLSSSHSMQLSEQGALPHTELISSQATEHADIPIYQGQYQQRSAHDNVKGGQVFGHLSSSQNFHSNASHDSQQLLPTNQQLDDSSNDVSYVLKGSQPEQMHQAQWRPQTMEKAPVTNDSSLEKQIQADLCQRTMSQDGAQQPFSSDWRLPGCTVTPADPALPKLPSGGLEQAAGNIYYFRQMKWLLLLFHAKSCLTPVGSCKFHRCFQVQELVKHFENCKRKDCSYRDCRRSRMVTEHYKACVDLQCPVCSNAKKLLQRSAELASKQKPPEPRKIAQQNTAQRIMNGVEGDIMDIDLVSDEIFDSQPSVPKRLKMQPVSPSTAEREVSMPSNAGLILQETHSELPDQNNKVGQLKMDVKIDPRPLQKPAKIGYGTDGNVPTARHNVAPGGSNEIKTHVKQEIMPIDKETSETAPEVKNEANDSTDITVSKSGKPKIKGVSMTELFTPEQIQEHINSLRLWVGQSKAKAEKNQLMGHNENENSCQLCKVEKLTFEPPPIYCSPCGARIKRNAPYYTVGTGDTRHFFCIPCYNESRGDTIEVEGQNFLKARFEKKRNDEETEEWWVQCDKCECWQHQICALFNGRRNDGGQAEYTCPNCYVEEVKRGLRMPLPQSAVLGAKDLPRTVLSDHIEDRLFKRLKQERQDRAAQERKSIEEVPGAEGLVVRVVSSVDKKLEVKPRFLEIFQEDNYPTEFPYKSKAVLLFQKIEGVEVCLFGMYVQEFGAECSYPNQRRVYLSYLDSVKYFRPEIRTVSGEALRTFVYHEILIGYLEYCKQRGFTSCYIWACPPLKGEDYILYCHPEIQKTPKSDKLREWYLSMLRKATKEEIVVELTNLYDHFFITMGECKAKVTASRLPYFDGDYWPGAAEDMINQLRQEEDDRKQQKKGKTKKIITKRALKAAGHTDLSGNASKDAMLMHKLGETIYPMKEDFIMVHLQYSCSHCCTLMVSGKRWVCHQCRSFYICDKCYDAEQQLEDRERHPSNSRDTHTLHPVDIVGLPKDTKDRDDILESEFFDTRQAFLSLCQGNHYQYDTLRRAKHSSMMVLYHLHNPTAPAFVTTCNVCCHDIETGQGWRCEVCPDFDLRKMLDLLVHASTCRSGSCQYPNCRKVKGLFRHGMQCKTRASGGCVLCKKMWYMLQLHARACRDSGCNVPRCRDLKEHLRRLQQQSDSRRRAAVNEMMRQRAAEVAANE</sequence>
<accession>Q6YXY2</accession>
<accession>Q0E444</accession>
<keyword id="KW-0010">Activator</keyword>
<keyword id="KW-0012">Acyltransferase</keyword>
<keyword id="KW-0156">Chromatin regulator</keyword>
<keyword id="KW-0175">Coiled coil</keyword>
<keyword id="KW-0479">Metal-binding</keyword>
<keyword id="KW-0539">Nucleus</keyword>
<keyword id="KW-1185">Reference proteome</keyword>
<keyword id="KW-0677">Repeat</keyword>
<keyword id="KW-0804">Transcription</keyword>
<keyword id="KW-0805">Transcription regulation</keyword>
<keyword id="KW-0808">Transferase</keyword>
<keyword id="KW-0862">Zinc</keyword>
<keyword id="KW-0863">Zinc-finger</keyword>